<feature type="initiator methionine" description="Removed" evidence="1">
    <location>
        <position position="1"/>
    </location>
</feature>
<feature type="chain" id="PRO_0000183904" description="Cytochrome c oxidase subunit 4">
    <location>
        <begin position="2"/>
        <end position="50"/>
    </location>
</feature>
<feature type="topological domain" description="Cytoplasmic">
    <location>
        <begin position="2"/>
        <end position="17"/>
    </location>
</feature>
<feature type="transmembrane region" description="Helical">
    <location>
        <begin position="18"/>
        <end position="49"/>
    </location>
</feature>
<feature type="topological domain" description="Periplasmic">
    <location>
        <position position="50"/>
    </location>
</feature>
<feature type="helix" evidence="3">
    <location>
        <begin position="18"/>
        <end position="49"/>
    </location>
</feature>
<dbReference type="EC" id="7.1.1.9"/>
<dbReference type="EMBL" id="Y08372">
    <property type="protein sequence ID" value="CAA69659.1"/>
    <property type="molecule type" value="Genomic_DNA"/>
</dbReference>
<dbReference type="RefSeq" id="WP_041529744.1">
    <property type="nucleotide sequence ID" value="NZ_PPGA01000010.1"/>
</dbReference>
<dbReference type="PDB" id="1QLE">
    <property type="method" value="X-ray"/>
    <property type="resolution" value="3.00 A"/>
    <property type="chains" value="D=8-50"/>
</dbReference>
<dbReference type="PDB" id="7ATE">
    <property type="method" value="EM"/>
    <property type="resolution" value="2.40 A"/>
    <property type="chains" value="D=1-50"/>
</dbReference>
<dbReference type="PDB" id="7ATN">
    <property type="method" value="EM"/>
    <property type="resolution" value="2.66 A"/>
    <property type="chains" value="D=1-50"/>
</dbReference>
<dbReference type="PDB" id="7AU3">
    <property type="method" value="EM"/>
    <property type="resolution" value="2.56 A"/>
    <property type="chains" value="D=1-50"/>
</dbReference>
<dbReference type="PDB" id="7AU6">
    <property type="method" value="EM"/>
    <property type="resolution" value="2.40 A"/>
    <property type="chains" value="D=1-50"/>
</dbReference>
<dbReference type="PDBsum" id="1QLE"/>
<dbReference type="PDBsum" id="7ATE"/>
<dbReference type="PDBsum" id="7ATN"/>
<dbReference type="PDBsum" id="7AU3"/>
<dbReference type="PDBsum" id="7AU6"/>
<dbReference type="EMDB" id="EMD-11921"/>
<dbReference type="EMDB" id="EMD-11922"/>
<dbReference type="EMDB" id="EMD-11924"/>
<dbReference type="EMDB" id="EMD-11925"/>
<dbReference type="SMR" id="P77921"/>
<dbReference type="EvolutionaryTrace" id="P77921"/>
<dbReference type="GO" id="GO:0005886">
    <property type="term" value="C:plasma membrane"/>
    <property type="evidence" value="ECO:0007669"/>
    <property type="project" value="UniProtKB-SubCell"/>
</dbReference>
<dbReference type="GO" id="GO:0004129">
    <property type="term" value="F:cytochrome-c oxidase activity"/>
    <property type="evidence" value="ECO:0007669"/>
    <property type="project" value="UniProtKB-EC"/>
</dbReference>
<dbReference type="Gene3D" id="1.20.5.160">
    <property type="entry name" value="Bacterial aa3 type cytochrome c oxidase subunit IV"/>
    <property type="match status" value="1"/>
</dbReference>
<dbReference type="InterPro" id="IPR036596">
    <property type="entry name" value="Cyt-C_aa3_sf"/>
</dbReference>
<dbReference type="InterPro" id="IPR012422">
    <property type="entry name" value="Cyt_c_oxidase_su4_bac-aa3"/>
</dbReference>
<dbReference type="Pfam" id="PF07835">
    <property type="entry name" value="COX4_pro_2"/>
    <property type="match status" value="1"/>
</dbReference>
<dbReference type="SUPFAM" id="SSF81469">
    <property type="entry name" value="Bacterial aa3 type cytochrome c oxidase subunit IV"/>
    <property type="match status" value="1"/>
</dbReference>
<keyword id="KW-0002">3D-structure</keyword>
<keyword id="KW-0997">Cell inner membrane</keyword>
<keyword id="KW-1003">Cell membrane</keyword>
<keyword id="KW-0903">Direct protein sequencing</keyword>
<keyword id="KW-0472">Membrane</keyword>
<keyword id="KW-1278">Translocase</keyword>
<keyword id="KW-0812">Transmembrane</keyword>
<keyword id="KW-1133">Transmembrane helix</keyword>
<sequence length="50" mass="5501">MASHHEITDHKHGEMDIRHQQATFAGFIKGATWVSILSIAVLVFLALANS</sequence>
<organism>
    <name type="scientific">Paracoccus denitrificans</name>
    <dbReference type="NCBI Taxonomy" id="266"/>
    <lineage>
        <taxon>Bacteria</taxon>
        <taxon>Pseudomonadati</taxon>
        <taxon>Pseudomonadota</taxon>
        <taxon>Alphaproteobacteria</taxon>
        <taxon>Rhodobacterales</taxon>
        <taxon>Paracoccaceae</taxon>
        <taxon>Paracoccus</taxon>
    </lineage>
</organism>
<proteinExistence type="evidence at protein level"/>
<protein>
    <recommendedName>
        <fullName>Cytochrome c oxidase subunit 4</fullName>
        <ecNumber>7.1.1.9</ecNumber>
    </recommendedName>
    <alternativeName>
        <fullName>Cytochrome aa3 subunit 4</fullName>
    </alternativeName>
    <alternativeName>
        <fullName>Cytochrome c oxidase polypeptide IV</fullName>
    </alternativeName>
</protein>
<name>COX4_PARDE</name>
<reference key="1">
    <citation type="journal article" date="1997" name="J. Biol. Chem.">
        <title>Isolation, analysis, and deletion of the gene coding for subunit IV of cytochrome c oxidase in Paracoccus denitrificans.</title>
        <authorList>
            <person name="Witt H."/>
            <person name="Ludwig B."/>
        </authorList>
    </citation>
    <scope>NUCLEOTIDE SEQUENCE [GENOMIC DNA]</scope>
    <scope>FUNCTION</scope>
    <source>
        <strain>Pd 1222</strain>
    </source>
</reference>
<reference key="2">
    <citation type="journal article" date="1994" name="Biochemistry">
        <title>Thermodynamic and structural stability of cytochrome c oxidase from Paracoccus denitrificans.</title>
        <authorList>
            <person name="Haltia T."/>
            <person name="Semo N."/>
            <person name="Arrondo J.L."/>
            <person name="Goni F.M."/>
            <person name="Freire E."/>
        </authorList>
    </citation>
    <scope>PROTEIN SEQUENCE OF 2-32</scope>
</reference>
<reference key="3">
    <citation type="journal article" date="1995" name="Nature">
        <title>Structure at 2.8-A resolution of cytochrome c oxidase from Paracoccus denitrificans.</title>
        <authorList>
            <person name="Iwata S."/>
            <person name="Ostermeier C."/>
            <person name="Ludwig B."/>
            <person name="Michel H."/>
        </authorList>
    </citation>
    <scope>X-RAY CRYSTALLOGRAPHY (2.8 ANGSTROMS)</scope>
</reference>
<gene>
    <name type="primary">ctaH</name>
</gene>
<accession>P77921</accession>
<comment type="function">
    <text evidence="2">Not required for enzymatic activity or proton pumping of the cytochrome c oxidase complex.</text>
</comment>
<comment type="catalytic activity">
    <reaction>
        <text>4 Fe(II)-[cytochrome c] + O2 + 8 H(+)(in) = 4 Fe(III)-[cytochrome c] + 2 H2O + 4 H(+)(out)</text>
        <dbReference type="Rhea" id="RHEA:11436"/>
        <dbReference type="Rhea" id="RHEA-COMP:10350"/>
        <dbReference type="Rhea" id="RHEA-COMP:14399"/>
        <dbReference type="ChEBI" id="CHEBI:15377"/>
        <dbReference type="ChEBI" id="CHEBI:15378"/>
        <dbReference type="ChEBI" id="CHEBI:15379"/>
        <dbReference type="ChEBI" id="CHEBI:29033"/>
        <dbReference type="ChEBI" id="CHEBI:29034"/>
        <dbReference type="EC" id="7.1.1.9"/>
    </reaction>
</comment>
<comment type="subcellular location">
    <subcellularLocation>
        <location>Cell inner membrane</location>
        <topology>Single-pass membrane protein</topology>
    </subcellularLocation>
</comment>
<evidence type="ECO:0000269" key="1">
    <source>
    </source>
</evidence>
<evidence type="ECO:0000269" key="2">
    <source>
    </source>
</evidence>
<evidence type="ECO:0007829" key="3">
    <source>
        <dbReference type="PDB" id="7ATE"/>
    </source>
</evidence>